<gene>
    <name evidence="1" type="primary">hcaC</name>
    <name type="ordered locus">EcHS_A2692</name>
</gene>
<accession>A8A346</accession>
<name>HCAC_ECOHS</name>
<organism>
    <name type="scientific">Escherichia coli O9:H4 (strain HS)</name>
    <dbReference type="NCBI Taxonomy" id="331112"/>
    <lineage>
        <taxon>Bacteria</taxon>
        <taxon>Pseudomonadati</taxon>
        <taxon>Pseudomonadota</taxon>
        <taxon>Gammaproteobacteria</taxon>
        <taxon>Enterobacterales</taxon>
        <taxon>Enterobacteriaceae</taxon>
        <taxon>Escherichia</taxon>
    </lineage>
</organism>
<dbReference type="EMBL" id="CP000802">
    <property type="protein sequence ID" value="ABV06950.1"/>
    <property type="molecule type" value="Genomic_DNA"/>
</dbReference>
<dbReference type="RefSeq" id="WP_001080102.1">
    <property type="nucleotide sequence ID" value="NC_009800.1"/>
</dbReference>
<dbReference type="SMR" id="A8A346"/>
<dbReference type="KEGG" id="ecx:EcHS_A2692"/>
<dbReference type="HOGENOM" id="CLU_055690_5_2_6"/>
<dbReference type="UniPathway" id="UPA00714"/>
<dbReference type="GO" id="GO:0051537">
    <property type="term" value="F:2 iron, 2 sulfur cluster binding"/>
    <property type="evidence" value="ECO:0007669"/>
    <property type="project" value="UniProtKB-KW"/>
</dbReference>
<dbReference type="GO" id="GO:0008695">
    <property type="term" value="F:3-phenylpropionate dioxygenase activity"/>
    <property type="evidence" value="ECO:0007669"/>
    <property type="project" value="UniProtKB-UniRule"/>
</dbReference>
<dbReference type="GO" id="GO:0046872">
    <property type="term" value="F:metal ion binding"/>
    <property type="evidence" value="ECO:0007669"/>
    <property type="project" value="UniProtKB-KW"/>
</dbReference>
<dbReference type="GO" id="GO:0019380">
    <property type="term" value="P:3-phenylpropionate catabolic process"/>
    <property type="evidence" value="ECO:0007669"/>
    <property type="project" value="UniProtKB-UniRule"/>
</dbReference>
<dbReference type="CDD" id="cd03528">
    <property type="entry name" value="Rieske_RO_ferredoxin"/>
    <property type="match status" value="1"/>
</dbReference>
<dbReference type="FunFam" id="2.102.10.10:FF:000005">
    <property type="entry name" value="3-phenylpropionate/cinnamic acid dioxygenase ferredoxin subunit"/>
    <property type="match status" value="1"/>
</dbReference>
<dbReference type="Gene3D" id="2.102.10.10">
    <property type="entry name" value="Rieske [2Fe-2S] iron-sulphur domain"/>
    <property type="match status" value="1"/>
</dbReference>
<dbReference type="HAMAP" id="MF_01650">
    <property type="entry name" value="HcaC"/>
    <property type="match status" value="1"/>
</dbReference>
<dbReference type="InterPro" id="IPR023739">
    <property type="entry name" value="HcaC"/>
</dbReference>
<dbReference type="InterPro" id="IPR017941">
    <property type="entry name" value="Rieske_2Fe-2S"/>
</dbReference>
<dbReference type="InterPro" id="IPR036922">
    <property type="entry name" value="Rieske_2Fe-2S_sf"/>
</dbReference>
<dbReference type="InterPro" id="IPR053387">
    <property type="entry name" value="Ring-hydroxylating_fd"/>
</dbReference>
<dbReference type="NCBIfam" id="NF042948">
    <property type="entry name" value="3PPDioc_HcaC"/>
    <property type="match status" value="1"/>
</dbReference>
<dbReference type="NCBIfam" id="NF007422">
    <property type="entry name" value="PRK09965.1"/>
    <property type="match status" value="1"/>
</dbReference>
<dbReference type="PANTHER" id="PTHR21496:SF23">
    <property type="entry name" value="3-PHENYLPROPIONATE_CINNAMIC ACID DIOXYGENASE FERREDOXIN SUBUNIT"/>
    <property type="match status" value="1"/>
</dbReference>
<dbReference type="PANTHER" id="PTHR21496">
    <property type="entry name" value="FERREDOXIN-RELATED"/>
    <property type="match status" value="1"/>
</dbReference>
<dbReference type="Pfam" id="PF00355">
    <property type="entry name" value="Rieske"/>
    <property type="match status" value="1"/>
</dbReference>
<dbReference type="SUPFAM" id="SSF50022">
    <property type="entry name" value="ISP domain"/>
    <property type="match status" value="1"/>
</dbReference>
<dbReference type="PROSITE" id="PS51296">
    <property type="entry name" value="RIESKE"/>
    <property type="match status" value="1"/>
</dbReference>
<keyword id="KW-0001">2Fe-2S</keyword>
<keyword id="KW-0058">Aromatic hydrocarbons catabolism</keyword>
<keyword id="KW-0249">Electron transport</keyword>
<keyword id="KW-0408">Iron</keyword>
<keyword id="KW-0411">Iron-sulfur</keyword>
<keyword id="KW-0479">Metal-binding</keyword>
<keyword id="KW-0813">Transport</keyword>
<evidence type="ECO:0000255" key="1">
    <source>
        <dbReference type="HAMAP-Rule" id="MF_01650"/>
    </source>
</evidence>
<proteinExistence type="inferred from homology"/>
<sequence>MNRIYACPVADVPEGEALRIDTSPVIALFNVGGEFYAINDRCSHGNASMSEGYLEDDATVECPLHAASFCLKTGKALCLPATDPLTTYPVHVEGGDIFIDLPEAQP</sequence>
<comment type="function">
    <text evidence="1">Part of the multicomponent 3-phenylpropionate dioxygenase, that converts 3-phenylpropionic acid (PP) and cinnamic acid (CI) into 3-phenylpropionate-dihydrodiol (PP-dihydrodiol) and cinnamic acid-dihydrodiol (CI-dihydrodiol), respectively. This protein seems to be a 2Fe-2S ferredoxin.</text>
</comment>
<comment type="cofactor">
    <cofactor evidence="1">
        <name>[2Fe-2S] cluster</name>
        <dbReference type="ChEBI" id="CHEBI:190135"/>
    </cofactor>
    <text evidence="1">Binds 1 [2Fe-2S] cluster per subunit.</text>
</comment>
<comment type="pathway">
    <text evidence="1">Aromatic compound metabolism; 3-phenylpropanoate degradation.</text>
</comment>
<comment type="subunit">
    <text evidence="1">This dioxygenase system consists of four proteins: the two subunits of the hydroxylase component (HcaE and HcaF), a ferredoxin (HcaC) and a ferredoxin reductase (HcaD).</text>
</comment>
<comment type="similarity">
    <text evidence="1">Belongs to the bacterial ring-hydroxylating dioxygenase ferredoxin component family.</text>
</comment>
<reference key="1">
    <citation type="journal article" date="2008" name="J. Bacteriol.">
        <title>The pangenome structure of Escherichia coli: comparative genomic analysis of E. coli commensal and pathogenic isolates.</title>
        <authorList>
            <person name="Rasko D.A."/>
            <person name="Rosovitz M.J."/>
            <person name="Myers G.S.A."/>
            <person name="Mongodin E.F."/>
            <person name="Fricke W.F."/>
            <person name="Gajer P."/>
            <person name="Crabtree J."/>
            <person name="Sebaihia M."/>
            <person name="Thomson N.R."/>
            <person name="Chaudhuri R."/>
            <person name="Henderson I.R."/>
            <person name="Sperandio V."/>
            <person name="Ravel J."/>
        </authorList>
    </citation>
    <scope>NUCLEOTIDE SEQUENCE [LARGE SCALE GENOMIC DNA]</scope>
    <source>
        <strain>HS</strain>
    </source>
</reference>
<protein>
    <recommendedName>
        <fullName evidence="1">3-phenylpropionate/cinnamic acid dioxygenase ferredoxin subunit</fullName>
    </recommendedName>
</protein>
<feature type="chain" id="PRO_0000333719" description="3-phenylpropionate/cinnamic acid dioxygenase ferredoxin subunit">
    <location>
        <begin position="1"/>
        <end position="106"/>
    </location>
</feature>
<feature type="domain" description="Rieske" evidence="1">
    <location>
        <begin position="4"/>
        <end position="99"/>
    </location>
</feature>
<feature type="binding site" evidence="1">
    <location>
        <position position="42"/>
    </location>
    <ligand>
        <name>[2Fe-2S] cluster</name>
        <dbReference type="ChEBI" id="CHEBI:190135"/>
    </ligand>
</feature>
<feature type="binding site" evidence="1">
    <location>
        <position position="44"/>
    </location>
    <ligand>
        <name>[2Fe-2S] cluster</name>
        <dbReference type="ChEBI" id="CHEBI:190135"/>
    </ligand>
</feature>
<feature type="binding site" evidence="1">
    <location>
        <position position="62"/>
    </location>
    <ligand>
        <name>[2Fe-2S] cluster</name>
        <dbReference type="ChEBI" id="CHEBI:190135"/>
    </ligand>
</feature>
<feature type="binding site" evidence="1">
    <location>
        <position position="65"/>
    </location>
    <ligand>
        <name>[2Fe-2S] cluster</name>
        <dbReference type="ChEBI" id="CHEBI:190135"/>
    </ligand>
</feature>